<sequence>MEETVNKILRAQETRAQLYKELEDALNANQEKKIGLEQMGIIVQLVTEGLNEVSSDIRNYQASLTKELKLLVDSLQEKERSKLQATVKLEQLKVVSTNSPVENTQISELEARLSSLSKEINDILQNMKDEI</sequence>
<dbReference type="EMBL" id="CU329670">
    <property type="protein sequence ID" value="CAK9838588.1"/>
    <property type="molecule type" value="Genomic_DNA"/>
</dbReference>
<dbReference type="PIR" id="T38886">
    <property type="entry name" value="T38886"/>
</dbReference>
<dbReference type="RefSeq" id="NP_594342.3">
    <property type="nucleotide sequence ID" value="NM_001019763.3"/>
</dbReference>
<dbReference type="PDB" id="8J0H">
    <property type="method" value="X-ray"/>
    <property type="resolution" value="3.38 A"/>
    <property type="chains" value="A/B/C/D/E/F/G/H=1-131"/>
</dbReference>
<dbReference type="PDBsum" id="8J0H"/>
<dbReference type="SMR" id="Q10214"/>
<dbReference type="BioGRID" id="279997">
    <property type="interactions" value="12"/>
</dbReference>
<dbReference type="PaxDb" id="4896-SPAC4H3.06.1"/>
<dbReference type="EnsemblFungi" id="SPAC4H3.06.1">
    <property type="protein sequence ID" value="SPAC4H3.06.1:pep"/>
    <property type="gene ID" value="SPAC4H3.06"/>
</dbReference>
<dbReference type="KEGG" id="spo:2543582"/>
<dbReference type="PomBase" id="SPAC4H3.06">
    <property type="gene designation" value="rss1"/>
</dbReference>
<dbReference type="VEuPathDB" id="FungiDB:SPAC4H3.06"/>
<dbReference type="HOGENOM" id="CLU_1928798_0_0_1"/>
<dbReference type="InParanoid" id="Q10214"/>
<dbReference type="OMA" id="YLSGKCP"/>
<dbReference type="PRO" id="PR:Q10214"/>
<dbReference type="Proteomes" id="UP000002485">
    <property type="component" value="Chromosome I"/>
</dbReference>
<dbReference type="GO" id="GO:0000781">
    <property type="term" value="C:chromosome, telomeric region"/>
    <property type="evidence" value="ECO:0007669"/>
    <property type="project" value="GOC"/>
</dbReference>
<dbReference type="GO" id="GO:0005829">
    <property type="term" value="C:cytosol"/>
    <property type="evidence" value="ECO:0007005"/>
    <property type="project" value="PomBase"/>
</dbReference>
<dbReference type="GO" id="GO:0005634">
    <property type="term" value="C:nucleus"/>
    <property type="evidence" value="ECO:0000314"/>
    <property type="project" value="PomBase"/>
</dbReference>
<dbReference type="GO" id="GO:0031508">
    <property type="term" value="P:pericentric heterochromatin formation"/>
    <property type="evidence" value="ECO:0000269"/>
    <property type="project" value="PomBase"/>
</dbReference>
<dbReference type="GO" id="GO:0031509">
    <property type="term" value="P:subtelomeric heterochromatin formation"/>
    <property type="evidence" value="ECO:0000315"/>
    <property type="project" value="PomBase"/>
</dbReference>
<dbReference type="InterPro" id="IPR039491">
    <property type="entry name" value="REX1-B"/>
</dbReference>
<dbReference type="PANTHER" id="PTHR28309">
    <property type="entry name" value="REQUIRED FOR EXCISION 1-B DOMAIN-CONTAINING PROTEIN"/>
    <property type="match status" value="1"/>
</dbReference>
<dbReference type="PANTHER" id="PTHR28309:SF1">
    <property type="entry name" value="REQUIRED FOR EXCISION 1-B DOMAIN-CONTAINING PROTEIN"/>
    <property type="match status" value="1"/>
</dbReference>
<dbReference type="Pfam" id="PF14966">
    <property type="entry name" value="DNA_repr_REX1B"/>
    <property type="match status" value="1"/>
</dbReference>
<gene>
    <name type="primary">rss1</name>
    <name type="synonym">Rex1BD</name>
    <name evidence="4" type="ORF">SPAC4H3.06</name>
</gene>
<organism>
    <name type="scientific">Schizosaccharomyces pombe (strain 972 / ATCC 24843)</name>
    <name type="common">Fission yeast</name>
    <dbReference type="NCBI Taxonomy" id="284812"/>
    <lineage>
        <taxon>Eukaryota</taxon>
        <taxon>Fungi</taxon>
        <taxon>Dikarya</taxon>
        <taxon>Ascomycota</taxon>
        <taxon>Taphrinomycotina</taxon>
        <taxon>Schizosaccharomycetes</taxon>
        <taxon>Schizosaccharomycetales</taxon>
        <taxon>Schizosaccharomycetaceae</taxon>
        <taxon>Schizosaccharomyces</taxon>
    </lineage>
</organism>
<comment type="function">
    <text evidence="2">Required for heterochromatin silencing within pericentromeric repeats and at telomers. Facilitates the recruitment of Clr6 histone deacetylase (HDAC) by interacting with histones. Also interacts with Rad25, which mediates heterochromatin silencing in DNA repeats by recruiting the RITS complex. Together with Rad25, forms a regulatory hub that defines heterochromatin silencing within tandem repeats via linking RNAi and HDAC.</text>
</comment>
<comment type="subunit">
    <text evidence="2">Monomer.</text>
</comment>
<comment type="subcellular location">
    <subcellularLocation>
        <location evidence="1">Cytoplasm</location>
    </subcellularLocation>
    <subcellularLocation>
        <location evidence="2">Nucleus</location>
    </subcellularLocation>
</comment>
<proteinExistence type="evidence at protein level"/>
<reference key="1">
    <citation type="journal article" date="2002" name="Nature">
        <title>The genome sequence of Schizosaccharomyces pombe.</title>
        <authorList>
            <person name="Wood V."/>
            <person name="Gwilliam R."/>
            <person name="Rajandream M.A."/>
            <person name="Lyne M.H."/>
            <person name="Lyne R."/>
            <person name="Stewart A."/>
            <person name="Sgouros J.G."/>
            <person name="Peat N."/>
            <person name="Hayles J."/>
            <person name="Baker S.G."/>
            <person name="Basham D."/>
            <person name="Bowman S."/>
            <person name="Brooks K."/>
            <person name="Brown D."/>
            <person name="Brown S."/>
            <person name="Chillingworth T."/>
            <person name="Churcher C.M."/>
            <person name="Collins M."/>
            <person name="Connor R."/>
            <person name="Cronin A."/>
            <person name="Davis P."/>
            <person name="Feltwell T."/>
            <person name="Fraser A."/>
            <person name="Gentles S."/>
            <person name="Goble A."/>
            <person name="Hamlin N."/>
            <person name="Harris D.E."/>
            <person name="Hidalgo J."/>
            <person name="Hodgson G."/>
            <person name="Holroyd S."/>
            <person name="Hornsby T."/>
            <person name="Howarth S."/>
            <person name="Huckle E.J."/>
            <person name="Hunt S."/>
            <person name="Jagels K."/>
            <person name="James K.D."/>
            <person name="Jones L."/>
            <person name="Jones M."/>
            <person name="Leather S."/>
            <person name="McDonald S."/>
            <person name="McLean J."/>
            <person name="Mooney P."/>
            <person name="Moule S."/>
            <person name="Mungall K.L."/>
            <person name="Murphy L.D."/>
            <person name="Niblett D."/>
            <person name="Odell C."/>
            <person name="Oliver K."/>
            <person name="O'Neil S."/>
            <person name="Pearson D."/>
            <person name="Quail M.A."/>
            <person name="Rabbinowitsch E."/>
            <person name="Rutherford K.M."/>
            <person name="Rutter S."/>
            <person name="Saunders D."/>
            <person name="Seeger K."/>
            <person name="Sharp S."/>
            <person name="Skelton J."/>
            <person name="Simmonds M.N."/>
            <person name="Squares R."/>
            <person name="Squares S."/>
            <person name="Stevens K."/>
            <person name="Taylor K."/>
            <person name="Taylor R.G."/>
            <person name="Tivey A."/>
            <person name="Walsh S.V."/>
            <person name="Warren T."/>
            <person name="Whitehead S."/>
            <person name="Woodward J.R."/>
            <person name="Volckaert G."/>
            <person name="Aert R."/>
            <person name="Robben J."/>
            <person name="Grymonprez B."/>
            <person name="Weltjens I."/>
            <person name="Vanstreels E."/>
            <person name="Rieger M."/>
            <person name="Schaefer M."/>
            <person name="Mueller-Auer S."/>
            <person name="Gabel C."/>
            <person name="Fuchs M."/>
            <person name="Duesterhoeft A."/>
            <person name="Fritzc C."/>
            <person name="Holzer E."/>
            <person name="Moestl D."/>
            <person name="Hilbert H."/>
            <person name="Borzym K."/>
            <person name="Langer I."/>
            <person name="Beck A."/>
            <person name="Lehrach H."/>
            <person name="Reinhardt R."/>
            <person name="Pohl T.M."/>
            <person name="Eger P."/>
            <person name="Zimmermann W."/>
            <person name="Wedler H."/>
            <person name="Wambutt R."/>
            <person name="Purnelle B."/>
            <person name="Goffeau A."/>
            <person name="Cadieu E."/>
            <person name="Dreano S."/>
            <person name="Gloux S."/>
            <person name="Lelaure V."/>
            <person name="Mottier S."/>
            <person name="Galibert F."/>
            <person name="Aves S.J."/>
            <person name="Xiang Z."/>
            <person name="Hunt C."/>
            <person name="Moore K."/>
            <person name="Hurst S.M."/>
            <person name="Lucas M."/>
            <person name="Rochet M."/>
            <person name="Gaillardin C."/>
            <person name="Tallada V.A."/>
            <person name="Garzon A."/>
            <person name="Thode G."/>
            <person name="Daga R.R."/>
            <person name="Cruzado L."/>
            <person name="Jimenez J."/>
            <person name="Sanchez M."/>
            <person name="del Rey F."/>
            <person name="Benito J."/>
            <person name="Dominguez A."/>
            <person name="Revuelta J.L."/>
            <person name="Moreno S."/>
            <person name="Armstrong J."/>
            <person name="Forsburg S.L."/>
            <person name="Cerutti L."/>
            <person name="Lowe T."/>
            <person name="McCombie W.R."/>
            <person name="Paulsen I."/>
            <person name="Potashkin J."/>
            <person name="Shpakovski G.V."/>
            <person name="Ussery D."/>
            <person name="Barrell B.G."/>
            <person name="Nurse P."/>
        </authorList>
    </citation>
    <scope>NUCLEOTIDE SEQUENCE [LARGE SCALE GENOMIC DNA]</scope>
    <source>
        <strain>972 / ATCC 24843</strain>
    </source>
</reference>
<reference key="2">
    <citation type="journal article" date="2011" name="Science">
        <title>Comparative functional genomics of the fission yeasts.</title>
        <authorList>
            <person name="Rhind N."/>
            <person name="Chen Z."/>
            <person name="Yassour M."/>
            <person name="Thompson D.A."/>
            <person name="Haas B.J."/>
            <person name="Habib N."/>
            <person name="Wapinski I."/>
            <person name="Roy S."/>
            <person name="Lin M.F."/>
            <person name="Heiman D.I."/>
            <person name="Young S.K."/>
            <person name="Furuya K."/>
            <person name="Guo Y."/>
            <person name="Pidoux A."/>
            <person name="Chen H.M."/>
            <person name="Robbertse B."/>
            <person name="Goldberg J.M."/>
            <person name="Aoki K."/>
            <person name="Bayne E.H."/>
            <person name="Berlin A.M."/>
            <person name="Desjardins C.A."/>
            <person name="Dobbs E."/>
            <person name="Dukaj L."/>
            <person name="Fan L."/>
            <person name="FitzGerald M.G."/>
            <person name="French C."/>
            <person name="Gujja S."/>
            <person name="Hansen K."/>
            <person name="Keifenheim D."/>
            <person name="Levin J.Z."/>
            <person name="Mosher R.A."/>
            <person name="Mueller C.A."/>
            <person name="Pfiffner J."/>
            <person name="Priest M."/>
            <person name="Russ C."/>
            <person name="Smialowska A."/>
            <person name="Swoboda P."/>
            <person name="Sykes S.M."/>
            <person name="Vaughn M."/>
            <person name="Vengrova S."/>
            <person name="Yoder R."/>
            <person name="Zeng Q."/>
            <person name="Allshire R."/>
            <person name="Baulcombe D."/>
            <person name="Birren B.W."/>
            <person name="Brown W."/>
            <person name="Ekwall K."/>
            <person name="Kellis M."/>
            <person name="Leatherwood J."/>
            <person name="Levin H."/>
            <person name="Margalit H."/>
            <person name="Martienssen R."/>
            <person name="Nieduszynski C.A."/>
            <person name="Spatafora J.W."/>
            <person name="Friedman N."/>
            <person name="Dalgaard J.Z."/>
            <person name="Baumann P."/>
            <person name="Niki H."/>
            <person name="Regev A."/>
            <person name="Nusbaum C."/>
        </authorList>
    </citation>
    <scope>REVISION OF GENE MODEL</scope>
</reference>
<reference key="3">
    <citation type="journal article" date="2006" name="Nat. Biotechnol.">
        <title>ORFeome cloning and global analysis of protein localization in the fission yeast Schizosaccharomyces pombe.</title>
        <authorList>
            <person name="Matsuyama A."/>
            <person name="Arai R."/>
            <person name="Yashiroda Y."/>
            <person name="Shirai A."/>
            <person name="Kamata A."/>
            <person name="Sekido S."/>
            <person name="Kobayashi Y."/>
            <person name="Hashimoto A."/>
            <person name="Hamamoto M."/>
            <person name="Hiraoka Y."/>
            <person name="Horinouchi S."/>
            <person name="Yoshida M."/>
        </authorList>
    </citation>
    <scope>SUBCELLULAR LOCATION [LARGE SCALE ANALYSIS]</scope>
</reference>
<reference evidence="5" key="4">
    <citation type="journal article" date="2023" name="Proc. Natl. Acad. Sci. U.S.A.">
        <title>Rex1BD and the 14-3-3 protein control heterochromatin organization at tandem repeats by linking RNAi and HDAC.</title>
        <authorList>
            <person name="Gao J."/>
            <person name="Sun W."/>
            <person name="Li J."/>
            <person name="Ban H."/>
            <person name="Zhang T."/>
            <person name="Liao J."/>
            <person name="Kim N."/>
            <person name="Lee S.H."/>
            <person name="Dong Q."/>
            <person name="Madramootoo R."/>
            <person name="Chen Y."/>
            <person name="Li F."/>
        </authorList>
    </citation>
    <scope>X-RAY CRYSTALLOGRAPHY (3.38 ANGSTROMS)</scope>
    <scope>FUNCTION</scope>
    <scope>SUBUNIT</scope>
    <scope>SUBCELLULAR LOCATION</scope>
</reference>
<keyword id="KW-0002">3D-structure</keyword>
<keyword id="KW-0963">Cytoplasm</keyword>
<keyword id="KW-0539">Nucleus</keyword>
<keyword id="KW-1185">Reference proteome</keyword>
<evidence type="ECO:0000269" key="1">
    <source>
    </source>
</evidence>
<evidence type="ECO:0000269" key="2">
    <source>
    </source>
</evidence>
<evidence type="ECO:0000305" key="3"/>
<evidence type="ECO:0000312" key="4">
    <source>
        <dbReference type="PomBase" id="SPAC4H3.06"/>
    </source>
</evidence>
<evidence type="ECO:0007744" key="5">
    <source>
        <dbReference type="PDB" id="8J0H"/>
    </source>
</evidence>
<evidence type="ECO:0007829" key="6">
    <source>
        <dbReference type="PDB" id="8J0H"/>
    </source>
</evidence>
<name>REX1B_SCHPO</name>
<accession>Q10214</accession>
<accession>A0AAN2H662</accession>
<feature type="chain" id="PRO_0000116483" description="Heterochromatin silencing protein rss1">
    <location>
        <begin position="1"/>
        <end position="131"/>
    </location>
</feature>
<feature type="helix" evidence="6">
    <location>
        <begin position="36"/>
        <end position="59"/>
    </location>
</feature>
<feature type="turn" evidence="6">
    <location>
        <begin position="60"/>
        <end position="63"/>
    </location>
</feature>
<feature type="helix" evidence="6">
    <location>
        <begin position="66"/>
        <end position="95"/>
    </location>
</feature>
<feature type="helix" evidence="6">
    <location>
        <begin position="100"/>
        <end position="128"/>
    </location>
</feature>
<protein>
    <recommendedName>
        <fullName evidence="3">Heterochromatin silencing protein rss1</fullName>
    </recommendedName>
</protein>